<proteinExistence type="evidence at protein level"/>
<organism>
    <name type="scientific">Homo sapiens</name>
    <name type="common">Human</name>
    <dbReference type="NCBI Taxonomy" id="9606"/>
    <lineage>
        <taxon>Eukaryota</taxon>
        <taxon>Metazoa</taxon>
        <taxon>Chordata</taxon>
        <taxon>Craniata</taxon>
        <taxon>Vertebrata</taxon>
        <taxon>Euteleostomi</taxon>
        <taxon>Mammalia</taxon>
        <taxon>Eutheria</taxon>
        <taxon>Euarchontoglires</taxon>
        <taxon>Primates</taxon>
        <taxon>Haplorrhini</taxon>
        <taxon>Catarrhini</taxon>
        <taxon>Hominidae</taxon>
        <taxon>Homo</taxon>
    </lineage>
</organism>
<feature type="chain" id="PRO_0000278479" description="AMMECR1-like protein">
    <location>
        <begin position="1"/>
        <end position="310"/>
    </location>
</feature>
<feature type="domain" description="AMMECR1" evidence="1">
    <location>
        <begin position="97"/>
        <end position="291"/>
    </location>
</feature>
<feature type="region of interest" description="Disordered" evidence="2">
    <location>
        <begin position="26"/>
        <end position="95"/>
    </location>
</feature>
<feature type="compositionally biased region" description="Polar residues" evidence="2">
    <location>
        <begin position="28"/>
        <end position="66"/>
    </location>
</feature>
<feature type="modified residue" description="Phosphoserine" evidence="3 4 5">
    <location>
        <position position="74"/>
    </location>
</feature>
<accession>Q6DCA0</accession>
<accession>B4E276</accession>
<keyword id="KW-0597">Phosphoprotein</keyword>
<keyword id="KW-1267">Proteomics identification</keyword>
<keyword id="KW-1185">Reference proteome</keyword>
<sequence length="310" mass="34499">MGKRRCVPPLEPKLAAGCCGVKKPKLSGSGTHSHGNQSTTVPGSSSGPLQNHQHVDSSSGRENVSDLTLGPGNSPITRMNPASGALSPLPRPNGTANTTKNLVVTAEMCCYCFDVLYCHLYGFPQPRLPRFTNDPYPLFVTWKTGRDKRLRGCIGTFSAMNLHSGLREYTLTSALKDSRFPPLTREELPKLFCSVSLLTNFEDASDYLDWEVGVHGIRIEFINEKGVKRTATYLPEVAKEQDWDQIQTIDSLLRKGGFKAPITSEFRKTIKLTRYRSEKVTISYAEYIASRQHCFQNGTLHAPPLYNHYS</sequence>
<protein>
    <recommendedName>
        <fullName>AMMECR1-like protein</fullName>
    </recommendedName>
</protein>
<dbReference type="EMBL" id="AK304145">
    <property type="protein sequence ID" value="BAG65038.1"/>
    <property type="molecule type" value="mRNA"/>
</dbReference>
<dbReference type="EMBL" id="CH471103">
    <property type="protein sequence ID" value="EAW95346.1"/>
    <property type="molecule type" value="Genomic_DNA"/>
</dbReference>
<dbReference type="EMBL" id="BC016181">
    <property type="protein sequence ID" value="AAH16181.1"/>
    <property type="molecule type" value="mRNA"/>
</dbReference>
<dbReference type="EMBL" id="BC078174">
    <property type="protein sequence ID" value="AAH78174.1"/>
    <property type="molecule type" value="mRNA"/>
</dbReference>
<dbReference type="CCDS" id="CCDS2152.1"/>
<dbReference type="RefSeq" id="NP_001186069.1">
    <property type="nucleotide sequence ID" value="NM_001199140.2"/>
</dbReference>
<dbReference type="RefSeq" id="NP_113633.2">
    <property type="nucleotide sequence ID" value="NM_031445.2"/>
</dbReference>
<dbReference type="SMR" id="Q6DCA0"/>
<dbReference type="BioGRID" id="123698">
    <property type="interactions" value="18"/>
</dbReference>
<dbReference type="FunCoup" id="Q6DCA0">
    <property type="interactions" value="2358"/>
</dbReference>
<dbReference type="IntAct" id="Q6DCA0">
    <property type="interactions" value="12"/>
</dbReference>
<dbReference type="STRING" id="9606.ENSP00000272647"/>
<dbReference type="GlyGen" id="Q6DCA0">
    <property type="glycosylation" value="3 sites, 2 N-linked glycans (2 sites), 1 O-linked glycan (1 site)"/>
</dbReference>
<dbReference type="iPTMnet" id="Q6DCA0"/>
<dbReference type="PhosphoSitePlus" id="Q6DCA0"/>
<dbReference type="BioMuta" id="AMMECR1L"/>
<dbReference type="DMDM" id="74736367"/>
<dbReference type="jPOST" id="Q6DCA0"/>
<dbReference type="MassIVE" id="Q6DCA0"/>
<dbReference type="PaxDb" id="9606-ENSP00000272647"/>
<dbReference type="PeptideAtlas" id="Q6DCA0"/>
<dbReference type="ProteomicsDB" id="66221"/>
<dbReference type="Pumba" id="Q6DCA0"/>
<dbReference type="Antibodypedia" id="56027">
    <property type="antibodies" value="14 antibodies from 7 providers"/>
</dbReference>
<dbReference type="DNASU" id="83607"/>
<dbReference type="Ensembl" id="ENST00000272647.10">
    <property type="protein sequence ID" value="ENSP00000272647.6"/>
    <property type="gene ID" value="ENSG00000144233.12"/>
</dbReference>
<dbReference type="Ensembl" id="ENST00000393001.1">
    <property type="protein sequence ID" value="ENSP00000376726.1"/>
    <property type="gene ID" value="ENSG00000144233.12"/>
</dbReference>
<dbReference type="GeneID" id="83607"/>
<dbReference type="KEGG" id="hsa:83607"/>
<dbReference type="MANE-Select" id="ENST00000272647.10">
    <property type="protein sequence ID" value="ENSP00000272647.6"/>
    <property type="RefSeq nucleotide sequence ID" value="NM_001199140.2"/>
    <property type="RefSeq protein sequence ID" value="NP_001186069.1"/>
</dbReference>
<dbReference type="UCSC" id="uc002tpl.5">
    <property type="organism name" value="human"/>
</dbReference>
<dbReference type="AGR" id="HGNC:28658"/>
<dbReference type="CTD" id="83607"/>
<dbReference type="DisGeNET" id="83607"/>
<dbReference type="GeneCards" id="AMMECR1L"/>
<dbReference type="HGNC" id="HGNC:28658">
    <property type="gene designation" value="AMMECR1L"/>
</dbReference>
<dbReference type="HPA" id="ENSG00000144233">
    <property type="expression patterns" value="Low tissue specificity"/>
</dbReference>
<dbReference type="neXtProt" id="NX_Q6DCA0"/>
<dbReference type="OpenTargets" id="ENSG00000144233"/>
<dbReference type="PharmGKB" id="PA162376350"/>
<dbReference type="VEuPathDB" id="HostDB:ENSG00000144233"/>
<dbReference type="eggNOG" id="KOG3274">
    <property type="taxonomic scope" value="Eukaryota"/>
</dbReference>
<dbReference type="GeneTree" id="ENSGT00390000010397"/>
<dbReference type="HOGENOM" id="CLU_052828_0_0_1"/>
<dbReference type="InParanoid" id="Q6DCA0"/>
<dbReference type="OMA" id="GTHTHGN"/>
<dbReference type="OrthoDB" id="24630at2759"/>
<dbReference type="PAN-GO" id="Q6DCA0">
    <property type="GO annotations" value="1 GO annotation based on evolutionary models"/>
</dbReference>
<dbReference type="PhylomeDB" id="Q6DCA0"/>
<dbReference type="TreeFam" id="TF314680"/>
<dbReference type="PathwayCommons" id="Q6DCA0"/>
<dbReference type="SignaLink" id="Q6DCA0"/>
<dbReference type="BioGRID-ORCS" id="83607">
    <property type="hits" value="10 hits in 1151 CRISPR screens"/>
</dbReference>
<dbReference type="ChiTaRS" id="AMMECR1L">
    <property type="organism name" value="human"/>
</dbReference>
<dbReference type="GenomeRNAi" id="83607"/>
<dbReference type="Pharos" id="Q6DCA0">
    <property type="development level" value="Tdark"/>
</dbReference>
<dbReference type="PRO" id="PR:Q6DCA0"/>
<dbReference type="Proteomes" id="UP000005640">
    <property type="component" value="Chromosome 2"/>
</dbReference>
<dbReference type="RNAct" id="Q6DCA0">
    <property type="molecule type" value="protein"/>
</dbReference>
<dbReference type="Bgee" id="ENSG00000144233">
    <property type="expression patterns" value="Expressed in epithelial cell of pancreas and 187 other cell types or tissues"/>
</dbReference>
<dbReference type="ExpressionAtlas" id="Q6DCA0">
    <property type="expression patterns" value="baseline and differential"/>
</dbReference>
<dbReference type="GO" id="GO:0005634">
    <property type="term" value="C:nucleus"/>
    <property type="evidence" value="ECO:0000318"/>
    <property type="project" value="GO_Central"/>
</dbReference>
<dbReference type="FunFam" id="3.30.700.20:FF:000001">
    <property type="entry name" value="AMME syndrome candidate gene 1"/>
    <property type="match status" value="1"/>
</dbReference>
<dbReference type="Gene3D" id="3.30.700.20">
    <property type="entry name" value="Hypothetical protein ph0010, domain 1"/>
    <property type="match status" value="1"/>
</dbReference>
<dbReference type="InterPro" id="IPR023473">
    <property type="entry name" value="AMMECR1"/>
</dbReference>
<dbReference type="InterPro" id="IPR036071">
    <property type="entry name" value="AMMECR1_dom_sf"/>
</dbReference>
<dbReference type="InterPro" id="IPR002733">
    <property type="entry name" value="AMMECR1_domain"/>
</dbReference>
<dbReference type="InterPro" id="IPR027485">
    <property type="entry name" value="AMMECR1_N"/>
</dbReference>
<dbReference type="NCBIfam" id="TIGR00296">
    <property type="entry name" value="TIGR00296 family protein"/>
    <property type="match status" value="1"/>
</dbReference>
<dbReference type="PANTHER" id="PTHR13016">
    <property type="entry name" value="AMMECR1 HOMOLOG"/>
    <property type="match status" value="1"/>
</dbReference>
<dbReference type="PANTHER" id="PTHR13016:SF1">
    <property type="entry name" value="AMMECR1-LIKE PROTEIN"/>
    <property type="match status" value="1"/>
</dbReference>
<dbReference type="Pfam" id="PF01871">
    <property type="entry name" value="AMMECR1"/>
    <property type="match status" value="1"/>
</dbReference>
<dbReference type="SUPFAM" id="SSF143447">
    <property type="entry name" value="AMMECR1-like"/>
    <property type="match status" value="1"/>
</dbReference>
<dbReference type="PROSITE" id="PS51112">
    <property type="entry name" value="AMMECR1"/>
    <property type="match status" value="1"/>
</dbReference>
<gene>
    <name type="primary">AMMECR1L</name>
</gene>
<reference key="1">
    <citation type="journal article" date="2004" name="Nat. Genet.">
        <title>Complete sequencing and characterization of 21,243 full-length human cDNAs.</title>
        <authorList>
            <person name="Ota T."/>
            <person name="Suzuki Y."/>
            <person name="Nishikawa T."/>
            <person name="Otsuki T."/>
            <person name="Sugiyama T."/>
            <person name="Irie R."/>
            <person name="Wakamatsu A."/>
            <person name="Hayashi K."/>
            <person name="Sato H."/>
            <person name="Nagai K."/>
            <person name="Kimura K."/>
            <person name="Makita H."/>
            <person name="Sekine M."/>
            <person name="Obayashi M."/>
            <person name="Nishi T."/>
            <person name="Shibahara T."/>
            <person name="Tanaka T."/>
            <person name="Ishii S."/>
            <person name="Yamamoto J."/>
            <person name="Saito K."/>
            <person name="Kawai Y."/>
            <person name="Isono Y."/>
            <person name="Nakamura Y."/>
            <person name="Nagahari K."/>
            <person name="Murakami K."/>
            <person name="Yasuda T."/>
            <person name="Iwayanagi T."/>
            <person name="Wagatsuma M."/>
            <person name="Shiratori A."/>
            <person name="Sudo H."/>
            <person name="Hosoiri T."/>
            <person name="Kaku Y."/>
            <person name="Kodaira H."/>
            <person name="Kondo H."/>
            <person name="Sugawara M."/>
            <person name="Takahashi M."/>
            <person name="Kanda K."/>
            <person name="Yokoi T."/>
            <person name="Furuya T."/>
            <person name="Kikkawa E."/>
            <person name="Omura Y."/>
            <person name="Abe K."/>
            <person name="Kamihara K."/>
            <person name="Katsuta N."/>
            <person name="Sato K."/>
            <person name="Tanikawa M."/>
            <person name="Yamazaki M."/>
            <person name="Ninomiya K."/>
            <person name="Ishibashi T."/>
            <person name="Yamashita H."/>
            <person name="Murakawa K."/>
            <person name="Fujimori K."/>
            <person name="Tanai H."/>
            <person name="Kimata M."/>
            <person name="Watanabe M."/>
            <person name="Hiraoka S."/>
            <person name="Chiba Y."/>
            <person name="Ishida S."/>
            <person name="Ono Y."/>
            <person name="Takiguchi S."/>
            <person name="Watanabe S."/>
            <person name="Yosida M."/>
            <person name="Hotuta T."/>
            <person name="Kusano J."/>
            <person name="Kanehori K."/>
            <person name="Takahashi-Fujii A."/>
            <person name="Hara H."/>
            <person name="Tanase T.-O."/>
            <person name="Nomura Y."/>
            <person name="Togiya S."/>
            <person name="Komai F."/>
            <person name="Hara R."/>
            <person name="Takeuchi K."/>
            <person name="Arita M."/>
            <person name="Imose N."/>
            <person name="Musashino K."/>
            <person name="Yuuki H."/>
            <person name="Oshima A."/>
            <person name="Sasaki N."/>
            <person name="Aotsuka S."/>
            <person name="Yoshikawa Y."/>
            <person name="Matsunawa H."/>
            <person name="Ichihara T."/>
            <person name="Shiohata N."/>
            <person name="Sano S."/>
            <person name="Moriya S."/>
            <person name="Momiyama H."/>
            <person name="Satoh N."/>
            <person name="Takami S."/>
            <person name="Terashima Y."/>
            <person name="Suzuki O."/>
            <person name="Nakagawa S."/>
            <person name="Senoh A."/>
            <person name="Mizoguchi H."/>
            <person name="Goto Y."/>
            <person name="Shimizu F."/>
            <person name="Wakebe H."/>
            <person name="Hishigaki H."/>
            <person name="Watanabe T."/>
            <person name="Sugiyama A."/>
            <person name="Takemoto M."/>
            <person name="Kawakami B."/>
            <person name="Yamazaki M."/>
            <person name="Watanabe K."/>
            <person name="Kumagai A."/>
            <person name="Itakura S."/>
            <person name="Fukuzumi Y."/>
            <person name="Fujimori Y."/>
            <person name="Komiyama M."/>
            <person name="Tashiro H."/>
            <person name="Tanigami A."/>
            <person name="Fujiwara T."/>
            <person name="Ono T."/>
            <person name="Yamada K."/>
            <person name="Fujii Y."/>
            <person name="Ozaki K."/>
            <person name="Hirao M."/>
            <person name="Ohmori Y."/>
            <person name="Kawabata A."/>
            <person name="Hikiji T."/>
            <person name="Kobatake N."/>
            <person name="Inagaki H."/>
            <person name="Ikema Y."/>
            <person name="Okamoto S."/>
            <person name="Okitani R."/>
            <person name="Kawakami T."/>
            <person name="Noguchi S."/>
            <person name="Itoh T."/>
            <person name="Shigeta K."/>
            <person name="Senba T."/>
            <person name="Matsumura K."/>
            <person name="Nakajima Y."/>
            <person name="Mizuno T."/>
            <person name="Morinaga M."/>
            <person name="Sasaki M."/>
            <person name="Togashi T."/>
            <person name="Oyama M."/>
            <person name="Hata H."/>
            <person name="Watanabe M."/>
            <person name="Komatsu T."/>
            <person name="Mizushima-Sugano J."/>
            <person name="Satoh T."/>
            <person name="Shirai Y."/>
            <person name="Takahashi Y."/>
            <person name="Nakagawa K."/>
            <person name="Okumura K."/>
            <person name="Nagase T."/>
            <person name="Nomura N."/>
            <person name="Kikuchi H."/>
            <person name="Masuho Y."/>
            <person name="Yamashita R."/>
            <person name="Nakai K."/>
            <person name="Yada T."/>
            <person name="Nakamura Y."/>
            <person name="Ohara O."/>
            <person name="Isogai T."/>
            <person name="Sugano S."/>
        </authorList>
    </citation>
    <scope>NUCLEOTIDE SEQUENCE [LARGE SCALE MRNA]</scope>
    <source>
        <tissue>Trachea</tissue>
    </source>
</reference>
<reference key="2">
    <citation type="submission" date="2005-07" db="EMBL/GenBank/DDBJ databases">
        <authorList>
            <person name="Mural R.J."/>
            <person name="Istrail S."/>
            <person name="Sutton G.G."/>
            <person name="Florea L."/>
            <person name="Halpern A.L."/>
            <person name="Mobarry C.M."/>
            <person name="Lippert R."/>
            <person name="Walenz B."/>
            <person name="Shatkay H."/>
            <person name="Dew I."/>
            <person name="Miller J.R."/>
            <person name="Flanigan M.J."/>
            <person name="Edwards N.J."/>
            <person name="Bolanos R."/>
            <person name="Fasulo D."/>
            <person name="Halldorsson B.V."/>
            <person name="Hannenhalli S."/>
            <person name="Turner R."/>
            <person name="Yooseph S."/>
            <person name="Lu F."/>
            <person name="Nusskern D.R."/>
            <person name="Shue B.C."/>
            <person name="Zheng X.H."/>
            <person name="Zhong F."/>
            <person name="Delcher A.L."/>
            <person name="Huson D.H."/>
            <person name="Kravitz S.A."/>
            <person name="Mouchard L."/>
            <person name="Reinert K."/>
            <person name="Remington K.A."/>
            <person name="Clark A.G."/>
            <person name="Waterman M.S."/>
            <person name="Eichler E.E."/>
            <person name="Adams M.D."/>
            <person name="Hunkapiller M.W."/>
            <person name="Myers E.W."/>
            <person name="Venter J.C."/>
        </authorList>
    </citation>
    <scope>NUCLEOTIDE SEQUENCE [LARGE SCALE GENOMIC DNA]</scope>
</reference>
<reference key="3">
    <citation type="journal article" date="2004" name="Genome Res.">
        <title>The status, quality, and expansion of the NIH full-length cDNA project: the Mammalian Gene Collection (MGC).</title>
        <authorList>
            <consortium name="The MGC Project Team"/>
        </authorList>
    </citation>
    <scope>NUCLEOTIDE SEQUENCE [LARGE SCALE MRNA]</scope>
    <source>
        <tissue>Colon</tissue>
        <tissue>Testis</tissue>
    </source>
</reference>
<reference key="4">
    <citation type="journal article" date="2008" name="Proc. Natl. Acad. Sci. U.S.A.">
        <title>A quantitative atlas of mitotic phosphorylation.</title>
        <authorList>
            <person name="Dephoure N."/>
            <person name="Zhou C."/>
            <person name="Villen J."/>
            <person name="Beausoleil S.A."/>
            <person name="Bakalarski C.E."/>
            <person name="Elledge S.J."/>
            <person name="Gygi S.P."/>
        </authorList>
    </citation>
    <scope>PHOSPHORYLATION [LARGE SCALE ANALYSIS] AT SER-74</scope>
    <scope>IDENTIFICATION BY MASS SPECTROMETRY [LARGE SCALE ANALYSIS]</scope>
    <source>
        <tissue>Cervix carcinoma</tissue>
    </source>
</reference>
<reference key="5">
    <citation type="journal article" date="2009" name="Sci. Signal.">
        <title>Quantitative phosphoproteomic analysis of T cell receptor signaling reveals system-wide modulation of protein-protein interactions.</title>
        <authorList>
            <person name="Mayya V."/>
            <person name="Lundgren D.H."/>
            <person name="Hwang S.-I."/>
            <person name="Rezaul K."/>
            <person name="Wu L."/>
            <person name="Eng J.K."/>
            <person name="Rodionov V."/>
            <person name="Han D.K."/>
        </authorList>
    </citation>
    <scope>PHOSPHORYLATION [LARGE SCALE ANALYSIS] AT SER-74</scope>
    <scope>IDENTIFICATION BY MASS SPECTROMETRY [LARGE SCALE ANALYSIS]</scope>
    <source>
        <tissue>Leukemic T-cell</tissue>
    </source>
</reference>
<reference key="6">
    <citation type="journal article" date="2013" name="J. Proteome Res.">
        <title>Toward a comprehensive characterization of a human cancer cell phosphoproteome.</title>
        <authorList>
            <person name="Zhou H."/>
            <person name="Di Palma S."/>
            <person name="Preisinger C."/>
            <person name="Peng M."/>
            <person name="Polat A.N."/>
            <person name="Heck A.J."/>
            <person name="Mohammed S."/>
        </authorList>
    </citation>
    <scope>PHOSPHORYLATION [LARGE SCALE ANALYSIS] AT SER-74</scope>
    <scope>IDENTIFICATION BY MASS SPECTROMETRY [LARGE SCALE ANALYSIS]</scope>
    <source>
        <tissue>Erythroleukemia</tissue>
    </source>
</reference>
<evidence type="ECO:0000255" key="1">
    <source>
        <dbReference type="PROSITE-ProRule" id="PRU00467"/>
    </source>
</evidence>
<evidence type="ECO:0000256" key="2">
    <source>
        <dbReference type="SAM" id="MobiDB-lite"/>
    </source>
</evidence>
<evidence type="ECO:0007744" key="3">
    <source>
    </source>
</evidence>
<evidence type="ECO:0007744" key="4">
    <source>
    </source>
</evidence>
<evidence type="ECO:0007744" key="5">
    <source>
    </source>
</evidence>
<name>AMERL_HUMAN</name>